<name>PURK_VIBVY</name>
<dbReference type="EC" id="6.3.4.18" evidence="1"/>
<dbReference type="EMBL" id="BA000037">
    <property type="protein sequence ID" value="BAC95983.1"/>
    <property type="molecule type" value="Genomic_DNA"/>
</dbReference>
<dbReference type="RefSeq" id="WP_011151419.1">
    <property type="nucleotide sequence ID" value="NC_005139.1"/>
</dbReference>
<dbReference type="SMR" id="Q7MGL1"/>
<dbReference type="STRING" id="672.VV93_v1c29420"/>
<dbReference type="KEGG" id="vvy:VV3219"/>
<dbReference type="PATRIC" id="fig|196600.6.peg.3185"/>
<dbReference type="eggNOG" id="COG0026">
    <property type="taxonomic scope" value="Bacteria"/>
</dbReference>
<dbReference type="HOGENOM" id="CLU_011534_0_0_6"/>
<dbReference type="UniPathway" id="UPA00074">
    <property type="reaction ID" value="UER00942"/>
</dbReference>
<dbReference type="Proteomes" id="UP000002675">
    <property type="component" value="Chromosome I"/>
</dbReference>
<dbReference type="GO" id="GO:0005829">
    <property type="term" value="C:cytosol"/>
    <property type="evidence" value="ECO:0007669"/>
    <property type="project" value="TreeGrafter"/>
</dbReference>
<dbReference type="GO" id="GO:0034028">
    <property type="term" value="F:5-(carboxyamino)imidazole ribonucleotide synthase activity"/>
    <property type="evidence" value="ECO:0007669"/>
    <property type="project" value="UniProtKB-UniRule"/>
</dbReference>
<dbReference type="GO" id="GO:0005524">
    <property type="term" value="F:ATP binding"/>
    <property type="evidence" value="ECO:0007669"/>
    <property type="project" value="UniProtKB-KW"/>
</dbReference>
<dbReference type="GO" id="GO:0046872">
    <property type="term" value="F:metal ion binding"/>
    <property type="evidence" value="ECO:0007669"/>
    <property type="project" value="InterPro"/>
</dbReference>
<dbReference type="GO" id="GO:0004638">
    <property type="term" value="F:phosphoribosylaminoimidazole carboxylase activity"/>
    <property type="evidence" value="ECO:0007669"/>
    <property type="project" value="InterPro"/>
</dbReference>
<dbReference type="GO" id="GO:0006189">
    <property type="term" value="P:'de novo' IMP biosynthetic process"/>
    <property type="evidence" value="ECO:0007669"/>
    <property type="project" value="UniProtKB-UniRule"/>
</dbReference>
<dbReference type="FunFam" id="3.30.1490.20:FF:000015">
    <property type="entry name" value="N5-carboxyaminoimidazole ribonucleotide synthase"/>
    <property type="match status" value="1"/>
</dbReference>
<dbReference type="FunFam" id="3.30.470.20:FF:000029">
    <property type="entry name" value="N5-carboxyaminoimidazole ribonucleotide synthase"/>
    <property type="match status" value="1"/>
</dbReference>
<dbReference type="Gene3D" id="3.40.50.20">
    <property type="match status" value="1"/>
</dbReference>
<dbReference type="Gene3D" id="3.30.1490.20">
    <property type="entry name" value="ATP-grasp fold, A domain"/>
    <property type="match status" value="1"/>
</dbReference>
<dbReference type="Gene3D" id="3.30.470.20">
    <property type="entry name" value="ATP-grasp fold, B domain"/>
    <property type="match status" value="1"/>
</dbReference>
<dbReference type="HAMAP" id="MF_01928">
    <property type="entry name" value="PurK"/>
    <property type="match status" value="1"/>
</dbReference>
<dbReference type="InterPro" id="IPR011761">
    <property type="entry name" value="ATP-grasp"/>
</dbReference>
<dbReference type="InterPro" id="IPR003135">
    <property type="entry name" value="ATP-grasp_carboxylate-amine"/>
</dbReference>
<dbReference type="InterPro" id="IPR013815">
    <property type="entry name" value="ATP_grasp_subdomain_1"/>
</dbReference>
<dbReference type="InterPro" id="IPR016185">
    <property type="entry name" value="PreATP-grasp_dom_sf"/>
</dbReference>
<dbReference type="InterPro" id="IPR005875">
    <property type="entry name" value="PurK"/>
</dbReference>
<dbReference type="InterPro" id="IPR040686">
    <property type="entry name" value="PurK_C"/>
</dbReference>
<dbReference type="InterPro" id="IPR054350">
    <property type="entry name" value="PurT/PurK_preATP-grasp"/>
</dbReference>
<dbReference type="InterPro" id="IPR011054">
    <property type="entry name" value="Rudment_hybrid_motif"/>
</dbReference>
<dbReference type="NCBIfam" id="NF004679">
    <property type="entry name" value="PRK06019.1-5"/>
    <property type="match status" value="1"/>
</dbReference>
<dbReference type="NCBIfam" id="TIGR01161">
    <property type="entry name" value="purK"/>
    <property type="match status" value="1"/>
</dbReference>
<dbReference type="PANTHER" id="PTHR11609:SF5">
    <property type="entry name" value="PHOSPHORIBOSYLAMINOIMIDAZOLE CARBOXYLASE"/>
    <property type="match status" value="1"/>
</dbReference>
<dbReference type="PANTHER" id="PTHR11609">
    <property type="entry name" value="PURINE BIOSYNTHESIS PROTEIN 6/7, PUR6/7"/>
    <property type="match status" value="1"/>
</dbReference>
<dbReference type="Pfam" id="PF02222">
    <property type="entry name" value="ATP-grasp"/>
    <property type="match status" value="1"/>
</dbReference>
<dbReference type="Pfam" id="PF17769">
    <property type="entry name" value="PurK_C"/>
    <property type="match status" value="1"/>
</dbReference>
<dbReference type="Pfam" id="PF22660">
    <property type="entry name" value="RS_preATP-grasp-like"/>
    <property type="match status" value="1"/>
</dbReference>
<dbReference type="SUPFAM" id="SSF56059">
    <property type="entry name" value="Glutathione synthetase ATP-binding domain-like"/>
    <property type="match status" value="1"/>
</dbReference>
<dbReference type="SUPFAM" id="SSF52440">
    <property type="entry name" value="PreATP-grasp domain"/>
    <property type="match status" value="1"/>
</dbReference>
<dbReference type="SUPFAM" id="SSF51246">
    <property type="entry name" value="Rudiment single hybrid motif"/>
    <property type="match status" value="1"/>
</dbReference>
<dbReference type="PROSITE" id="PS50975">
    <property type="entry name" value="ATP_GRASP"/>
    <property type="match status" value="1"/>
</dbReference>
<sequence>MHVLVLGAGQLARMMSLAGAPLNIQISAYDVTTGDVVHPLTLHLLGHGLEQAIEHVDVITAEFEHIPHDILAICQASGKFLPSSEAIKAGGDRRLEKTLLDHAGVRNANYYVIETREDFNKAIEHVGIPMVLKSALGGYDGRGQWRLKDAAQIETLWQEMAACIAATPTQAIVAEEFVPFQREVSLIGARGKEGQIEVYPLAENIHVNGVLSLSTAIDSPDLQEQAKHMFTAVAETLNYVGVLALEFFDVDGQLLVNEIAPRVHNSGHWTQQGAETCQFENHLRAVCGLPLGSTKLVRETSMINILGEDTLPASVMAMDGCHIHWYGKEKRAGRKMGHINVCGDYSGELQRRLCALANVLDEKAFPAVHEFAKKWQA</sequence>
<proteinExistence type="inferred from homology"/>
<comment type="function">
    <text evidence="1">Catalyzes the ATP-dependent conversion of 5-aminoimidazole ribonucleotide (AIR) and HCO(3)(-) to N5-carboxyaminoimidazole ribonucleotide (N5-CAIR).</text>
</comment>
<comment type="catalytic activity">
    <reaction evidence="1">
        <text>5-amino-1-(5-phospho-beta-D-ribosyl)imidazole + hydrogencarbonate + ATP = 5-carboxyamino-1-(5-phospho-D-ribosyl)imidazole + ADP + phosphate + 2 H(+)</text>
        <dbReference type="Rhea" id="RHEA:19317"/>
        <dbReference type="ChEBI" id="CHEBI:15378"/>
        <dbReference type="ChEBI" id="CHEBI:17544"/>
        <dbReference type="ChEBI" id="CHEBI:30616"/>
        <dbReference type="ChEBI" id="CHEBI:43474"/>
        <dbReference type="ChEBI" id="CHEBI:58730"/>
        <dbReference type="ChEBI" id="CHEBI:137981"/>
        <dbReference type="ChEBI" id="CHEBI:456216"/>
        <dbReference type="EC" id="6.3.4.18"/>
    </reaction>
</comment>
<comment type="pathway">
    <text evidence="1">Purine metabolism; IMP biosynthesis via de novo pathway; 5-amino-1-(5-phospho-D-ribosyl)imidazole-4-carboxylate from 5-amino-1-(5-phospho-D-ribosyl)imidazole (N5-CAIR route): step 1/2.</text>
</comment>
<comment type="subunit">
    <text evidence="1">Homodimer.</text>
</comment>
<comment type="similarity">
    <text evidence="1">Belongs to the PurK/PurT family.</text>
</comment>
<protein>
    <recommendedName>
        <fullName evidence="1">N5-carboxyaminoimidazole ribonucleotide synthase</fullName>
        <shortName evidence="1">N5-CAIR synthase</shortName>
        <ecNumber evidence="1">6.3.4.18</ecNumber>
    </recommendedName>
    <alternativeName>
        <fullName evidence="1">5-(carboxyamino)imidazole ribonucleotide synthetase</fullName>
    </alternativeName>
</protein>
<accession>Q7MGL1</accession>
<reference key="1">
    <citation type="journal article" date="2003" name="Genome Res.">
        <title>Comparative genome analysis of Vibrio vulnificus, a marine pathogen.</title>
        <authorList>
            <person name="Chen C.-Y."/>
            <person name="Wu K.-M."/>
            <person name="Chang Y.-C."/>
            <person name="Chang C.-H."/>
            <person name="Tsai H.-C."/>
            <person name="Liao T.-L."/>
            <person name="Liu Y.-M."/>
            <person name="Chen H.-J."/>
            <person name="Shen A.B.-T."/>
            <person name="Li J.-C."/>
            <person name="Su T.-L."/>
            <person name="Shao C.-P."/>
            <person name="Lee C.-T."/>
            <person name="Hor L.-I."/>
            <person name="Tsai S.-F."/>
        </authorList>
    </citation>
    <scope>NUCLEOTIDE SEQUENCE [LARGE SCALE GENOMIC DNA]</scope>
    <source>
        <strain>YJ016</strain>
    </source>
</reference>
<evidence type="ECO:0000255" key="1">
    <source>
        <dbReference type="HAMAP-Rule" id="MF_01928"/>
    </source>
</evidence>
<feature type="chain" id="PRO_0000075019" description="N5-carboxyaminoimidazole ribonucleotide synthase">
    <location>
        <begin position="1"/>
        <end position="377"/>
    </location>
</feature>
<feature type="domain" description="ATP-grasp" evidence="1">
    <location>
        <begin position="97"/>
        <end position="287"/>
    </location>
</feature>
<feature type="binding site" evidence="1">
    <location>
        <position position="93"/>
    </location>
    <ligand>
        <name>ATP</name>
        <dbReference type="ChEBI" id="CHEBI:30616"/>
    </ligand>
</feature>
<feature type="binding site" evidence="1">
    <location>
        <position position="133"/>
    </location>
    <ligand>
        <name>ATP</name>
        <dbReference type="ChEBI" id="CHEBI:30616"/>
    </ligand>
</feature>
<feature type="binding site" evidence="1">
    <location>
        <begin position="138"/>
        <end position="144"/>
    </location>
    <ligand>
        <name>ATP</name>
        <dbReference type="ChEBI" id="CHEBI:30616"/>
    </ligand>
</feature>
<feature type="binding site" evidence="1">
    <location>
        <begin position="175"/>
        <end position="178"/>
    </location>
    <ligand>
        <name>ATP</name>
        <dbReference type="ChEBI" id="CHEBI:30616"/>
    </ligand>
</feature>
<feature type="binding site" evidence="1">
    <location>
        <position position="183"/>
    </location>
    <ligand>
        <name>ATP</name>
        <dbReference type="ChEBI" id="CHEBI:30616"/>
    </ligand>
</feature>
<feature type="binding site" evidence="1">
    <location>
        <position position="206"/>
    </location>
    <ligand>
        <name>ATP</name>
        <dbReference type="ChEBI" id="CHEBI:30616"/>
    </ligand>
</feature>
<feature type="binding site" evidence="1">
    <location>
        <begin position="257"/>
        <end position="258"/>
    </location>
    <ligand>
        <name>ATP</name>
        <dbReference type="ChEBI" id="CHEBI:30616"/>
    </ligand>
</feature>
<gene>
    <name evidence="1" type="primary">purK</name>
    <name type="ordered locus">VV3219</name>
</gene>
<keyword id="KW-0067">ATP-binding</keyword>
<keyword id="KW-0436">Ligase</keyword>
<keyword id="KW-0547">Nucleotide-binding</keyword>
<keyword id="KW-0658">Purine biosynthesis</keyword>
<organism>
    <name type="scientific">Vibrio vulnificus (strain YJ016)</name>
    <dbReference type="NCBI Taxonomy" id="196600"/>
    <lineage>
        <taxon>Bacteria</taxon>
        <taxon>Pseudomonadati</taxon>
        <taxon>Pseudomonadota</taxon>
        <taxon>Gammaproteobacteria</taxon>
        <taxon>Vibrionales</taxon>
        <taxon>Vibrionaceae</taxon>
        <taxon>Vibrio</taxon>
    </lineage>
</organism>